<comment type="function">
    <text evidence="1">Catalyzes the conversion of heme O to heme A by two successive hydroxylations of the methyl group at C8. The first hydroxylation forms heme I, the second hydroxylation results in an unstable dihydroxymethyl group, which spontaneously dehydrates, resulting in the formyl group of heme A.</text>
</comment>
<comment type="catalytic activity">
    <reaction evidence="1">
        <text>Fe(II)-heme o + 2 A + H2O = Fe(II)-heme a + 2 AH2</text>
        <dbReference type="Rhea" id="RHEA:63388"/>
        <dbReference type="ChEBI" id="CHEBI:13193"/>
        <dbReference type="ChEBI" id="CHEBI:15377"/>
        <dbReference type="ChEBI" id="CHEBI:17499"/>
        <dbReference type="ChEBI" id="CHEBI:60530"/>
        <dbReference type="ChEBI" id="CHEBI:61715"/>
        <dbReference type="EC" id="1.17.99.9"/>
    </reaction>
    <physiologicalReaction direction="left-to-right" evidence="1">
        <dbReference type="Rhea" id="RHEA:63389"/>
    </physiologicalReaction>
</comment>
<comment type="cofactor">
    <cofactor evidence="1">
        <name>heme b</name>
        <dbReference type="ChEBI" id="CHEBI:60344"/>
    </cofactor>
</comment>
<comment type="pathway">
    <text evidence="1">Porphyrin-containing compound metabolism; heme A biosynthesis; heme A from heme O: step 1/1.</text>
</comment>
<comment type="subunit">
    <text evidence="1">Interacts with CtaB.</text>
</comment>
<comment type="subcellular location">
    <subcellularLocation>
        <location evidence="1">Cell membrane</location>
        <topology evidence="1">Multi-pass membrane protein</topology>
    </subcellularLocation>
</comment>
<comment type="similarity">
    <text evidence="1">Belongs to the COX15/CtaA family. Type 2 subfamily.</text>
</comment>
<proteinExistence type="inferred from homology"/>
<protein>
    <recommendedName>
        <fullName evidence="1">Heme A synthase</fullName>
        <shortName evidence="1">HAS</shortName>
        <ecNumber evidence="1">1.17.99.9</ecNumber>
    </recommendedName>
    <alternativeName>
        <fullName evidence="1">Cytochrome aa3-controlling protein</fullName>
    </alternativeName>
</protein>
<evidence type="ECO:0000255" key="1">
    <source>
        <dbReference type="HAMAP-Rule" id="MF_01665"/>
    </source>
</evidence>
<feature type="chain" id="PRO_0000349081" description="Heme A synthase">
    <location>
        <begin position="1"/>
        <end position="382"/>
    </location>
</feature>
<feature type="transmembrane region" description="Helical" evidence="1">
    <location>
        <begin position="37"/>
        <end position="57"/>
    </location>
</feature>
<feature type="transmembrane region" description="Helical" evidence="1">
    <location>
        <begin position="126"/>
        <end position="146"/>
    </location>
</feature>
<feature type="transmembrane region" description="Helical" evidence="1">
    <location>
        <begin position="152"/>
        <end position="172"/>
    </location>
</feature>
<feature type="transmembrane region" description="Helical" evidence="1">
    <location>
        <begin position="188"/>
        <end position="208"/>
    </location>
</feature>
<feature type="transmembrane region" description="Helical" evidence="1">
    <location>
        <begin position="231"/>
        <end position="251"/>
    </location>
</feature>
<feature type="transmembrane region" description="Helical" evidence="1">
    <location>
        <begin position="288"/>
        <end position="308"/>
    </location>
</feature>
<feature type="transmembrane region" description="Helical" evidence="1">
    <location>
        <begin position="332"/>
        <end position="352"/>
    </location>
</feature>
<feature type="transmembrane region" description="Helical" evidence="1">
    <location>
        <begin position="356"/>
        <end position="376"/>
    </location>
</feature>
<feature type="binding site" description="axial binding residue" evidence="1">
    <location>
        <position position="293"/>
    </location>
    <ligand>
        <name>heme</name>
        <dbReference type="ChEBI" id="CHEBI:30413"/>
    </ligand>
    <ligandPart>
        <name>Fe</name>
        <dbReference type="ChEBI" id="CHEBI:18248"/>
    </ligandPart>
</feature>
<feature type="binding site" description="axial binding residue" evidence="1">
    <location>
        <position position="353"/>
    </location>
    <ligand>
        <name>heme</name>
        <dbReference type="ChEBI" id="CHEBI:30413"/>
    </ligand>
    <ligandPart>
        <name>Fe</name>
        <dbReference type="ChEBI" id="CHEBI:18248"/>
    </ligandPart>
</feature>
<keyword id="KW-1003">Cell membrane</keyword>
<keyword id="KW-0350">Heme biosynthesis</keyword>
<keyword id="KW-0408">Iron</keyword>
<keyword id="KW-0472">Membrane</keyword>
<keyword id="KW-0479">Metal-binding</keyword>
<keyword id="KW-0560">Oxidoreductase</keyword>
<keyword id="KW-1185">Reference proteome</keyword>
<keyword id="KW-0812">Transmembrane</keyword>
<keyword id="KW-1133">Transmembrane helix</keyword>
<name>CTAA_ROSDO</name>
<accession>Q165T0</accession>
<dbReference type="EC" id="1.17.99.9" evidence="1"/>
<dbReference type="EMBL" id="CP000362">
    <property type="protein sequence ID" value="ABG32263.1"/>
    <property type="molecule type" value="Genomic_DNA"/>
</dbReference>
<dbReference type="RefSeq" id="WP_011568880.1">
    <property type="nucleotide sequence ID" value="NC_008209.1"/>
</dbReference>
<dbReference type="STRING" id="375451.RD1_2728"/>
<dbReference type="KEGG" id="rde:RD1_2728"/>
<dbReference type="eggNOG" id="COG1612">
    <property type="taxonomic scope" value="Bacteria"/>
</dbReference>
<dbReference type="HOGENOM" id="CLU_017627_0_0_5"/>
<dbReference type="OrthoDB" id="9793156at2"/>
<dbReference type="UniPathway" id="UPA00269">
    <property type="reaction ID" value="UER00713"/>
</dbReference>
<dbReference type="Proteomes" id="UP000007029">
    <property type="component" value="Chromosome"/>
</dbReference>
<dbReference type="GO" id="GO:0005886">
    <property type="term" value="C:plasma membrane"/>
    <property type="evidence" value="ECO:0007669"/>
    <property type="project" value="UniProtKB-SubCell"/>
</dbReference>
<dbReference type="GO" id="GO:0046872">
    <property type="term" value="F:metal ion binding"/>
    <property type="evidence" value="ECO:0007669"/>
    <property type="project" value="UniProtKB-KW"/>
</dbReference>
<dbReference type="GO" id="GO:0016653">
    <property type="term" value="F:oxidoreductase activity, acting on NAD(P)H, heme protein as acceptor"/>
    <property type="evidence" value="ECO:0007669"/>
    <property type="project" value="InterPro"/>
</dbReference>
<dbReference type="GO" id="GO:0006784">
    <property type="term" value="P:heme A biosynthetic process"/>
    <property type="evidence" value="ECO:0007669"/>
    <property type="project" value="UniProtKB-UniRule"/>
</dbReference>
<dbReference type="HAMAP" id="MF_01665">
    <property type="entry name" value="HemeA_synth_type2"/>
    <property type="match status" value="1"/>
</dbReference>
<dbReference type="InterPro" id="IPR003780">
    <property type="entry name" value="COX15/CtaA_fam"/>
</dbReference>
<dbReference type="InterPro" id="IPR054616">
    <property type="entry name" value="HemA_synt_rhodobact"/>
</dbReference>
<dbReference type="InterPro" id="IPR023754">
    <property type="entry name" value="HemeA_Synthase_type2"/>
</dbReference>
<dbReference type="NCBIfam" id="NF045570">
    <property type="entry name" value="HemSynCtaAAlphapr"/>
    <property type="match status" value="1"/>
</dbReference>
<dbReference type="PANTHER" id="PTHR23289">
    <property type="entry name" value="CYTOCHROME C OXIDASE ASSEMBLY PROTEIN COX15"/>
    <property type="match status" value="1"/>
</dbReference>
<dbReference type="PANTHER" id="PTHR23289:SF2">
    <property type="entry name" value="CYTOCHROME C OXIDASE ASSEMBLY PROTEIN COX15 HOMOLOG"/>
    <property type="match status" value="1"/>
</dbReference>
<dbReference type="Pfam" id="PF02628">
    <property type="entry name" value="COX15-CtaA"/>
    <property type="match status" value="1"/>
</dbReference>
<sequence>MSSKRKLFEEVGAAAATRPAAQPGLIDKRHSGARKAIRVWLQILFALVFIMIAVGGLTRLTDSGLSITEWRPLTGALPPLSEAEWQSEFEKYQAIDEFRIQNQWMQMADFKVIYWWEWGHRQLGRVIGVVWALGFGYFLVRRQVPAGWHGKLLFLGLLGGAQGAIGWWMVASGVTQGEGVTDVASYRLATHLGLAFVILGFIAWYIMELGRSAPDLMQARRIKEGKQWGMSTGLLHFTFLQILLGALVAGIDAGRSYTDWPMMGGQWFPSTALVLEPIWRNFFESPGLVQFMHRVTGYVLILFTVVVWLRGRRSSHPHTRFAFNAVLAAMTLQIVLGIVTVLYGAPAHIAIFHQTLAVIVWVLILRARFLSGYPIATSVRGT</sequence>
<gene>
    <name evidence="1" type="primary">ctaA</name>
    <name type="ordered locus">RD1_2728</name>
</gene>
<reference key="1">
    <citation type="journal article" date="2007" name="J. Bacteriol.">
        <title>The complete genome sequence of Roseobacter denitrificans reveals a mixotrophic rather than photosynthetic metabolism.</title>
        <authorList>
            <person name="Swingley W.D."/>
            <person name="Sadekar S."/>
            <person name="Mastrian S.D."/>
            <person name="Matthies H.J."/>
            <person name="Hao J."/>
            <person name="Ramos H."/>
            <person name="Acharya C.R."/>
            <person name="Conrad A.L."/>
            <person name="Taylor H.L."/>
            <person name="Dejesa L.C."/>
            <person name="Shah M.K."/>
            <person name="O'Huallachain M.E."/>
            <person name="Lince M.T."/>
            <person name="Blankenship R.E."/>
            <person name="Beatty J.T."/>
            <person name="Touchman J.W."/>
        </authorList>
    </citation>
    <scope>NUCLEOTIDE SEQUENCE [LARGE SCALE GENOMIC DNA]</scope>
    <source>
        <strain>ATCC 33942 / OCh 114</strain>
    </source>
</reference>
<organism>
    <name type="scientific">Roseobacter denitrificans (strain ATCC 33942 / OCh 114)</name>
    <name type="common">Erythrobacter sp. (strain OCh 114)</name>
    <name type="synonym">Roseobacter denitrificans</name>
    <dbReference type="NCBI Taxonomy" id="375451"/>
    <lineage>
        <taxon>Bacteria</taxon>
        <taxon>Pseudomonadati</taxon>
        <taxon>Pseudomonadota</taxon>
        <taxon>Alphaproteobacteria</taxon>
        <taxon>Rhodobacterales</taxon>
        <taxon>Roseobacteraceae</taxon>
        <taxon>Roseobacter</taxon>
    </lineage>
</organism>